<sequence>MSRIGNKVITMPAGVELTNNNNVITVKGPKGELTREFNKNIEIKVEGTEITVVRPNDSKEMKTIHGTTRANLNNMVVGVSEGFKKDLEMKGVGYRAQLQGTKLVLSVGKSHQDEVEAPEGITFTVANPTSISVEGINKEVVGQTAAYIRSLRSPEPYKGKGIRYVGEYVRLKEGKTGK</sequence>
<reference key="1">
    <citation type="journal article" date="2005" name="J. Infect. Dis.">
        <title>Genome sequence of a serotype M28 strain of group A Streptococcus: potential new insights into puerperal sepsis and bacterial disease specificity.</title>
        <authorList>
            <person name="Green N.M."/>
            <person name="Zhang S."/>
            <person name="Porcella S.F."/>
            <person name="Nagiec M.J."/>
            <person name="Barbian K.D."/>
            <person name="Beres S.B."/>
            <person name="Lefebvre R.B."/>
            <person name="Musser J.M."/>
        </authorList>
    </citation>
    <scope>NUCLEOTIDE SEQUENCE [LARGE SCALE GENOMIC DNA]</scope>
    <source>
        <strain>MGAS6180</strain>
    </source>
</reference>
<proteinExistence type="inferred from homology"/>
<organism>
    <name type="scientific">Streptococcus pyogenes serotype M28 (strain MGAS6180)</name>
    <dbReference type="NCBI Taxonomy" id="319701"/>
    <lineage>
        <taxon>Bacteria</taxon>
        <taxon>Bacillati</taxon>
        <taxon>Bacillota</taxon>
        <taxon>Bacilli</taxon>
        <taxon>Lactobacillales</taxon>
        <taxon>Streptococcaceae</taxon>
        <taxon>Streptococcus</taxon>
    </lineage>
</organism>
<name>RL6_STRPM</name>
<dbReference type="EMBL" id="CP000056">
    <property type="protein sequence ID" value="AAX71172.1"/>
    <property type="molecule type" value="Genomic_DNA"/>
</dbReference>
<dbReference type="RefSeq" id="WP_002986629.1">
    <property type="nucleotide sequence ID" value="NC_007296.2"/>
</dbReference>
<dbReference type="SMR" id="Q48VT4"/>
<dbReference type="GeneID" id="69900041"/>
<dbReference type="KEGG" id="spb:M28_Spy0058"/>
<dbReference type="HOGENOM" id="CLU_065464_1_2_9"/>
<dbReference type="GO" id="GO:0022625">
    <property type="term" value="C:cytosolic large ribosomal subunit"/>
    <property type="evidence" value="ECO:0007669"/>
    <property type="project" value="TreeGrafter"/>
</dbReference>
<dbReference type="GO" id="GO:0019843">
    <property type="term" value="F:rRNA binding"/>
    <property type="evidence" value="ECO:0007669"/>
    <property type="project" value="UniProtKB-UniRule"/>
</dbReference>
<dbReference type="GO" id="GO:0003735">
    <property type="term" value="F:structural constituent of ribosome"/>
    <property type="evidence" value="ECO:0007669"/>
    <property type="project" value="InterPro"/>
</dbReference>
<dbReference type="GO" id="GO:0002181">
    <property type="term" value="P:cytoplasmic translation"/>
    <property type="evidence" value="ECO:0007669"/>
    <property type="project" value="TreeGrafter"/>
</dbReference>
<dbReference type="FunFam" id="3.90.930.12:FF:000001">
    <property type="entry name" value="50S ribosomal protein L6"/>
    <property type="match status" value="1"/>
</dbReference>
<dbReference type="FunFam" id="3.90.930.12:FF:000002">
    <property type="entry name" value="50S ribosomal protein L6"/>
    <property type="match status" value="1"/>
</dbReference>
<dbReference type="Gene3D" id="3.90.930.12">
    <property type="entry name" value="Ribosomal protein L6, alpha-beta domain"/>
    <property type="match status" value="2"/>
</dbReference>
<dbReference type="HAMAP" id="MF_01365_B">
    <property type="entry name" value="Ribosomal_uL6_B"/>
    <property type="match status" value="1"/>
</dbReference>
<dbReference type="InterPro" id="IPR000702">
    <property type="entry name" value="Ribosomal_uL6-like"/>
</dbReference>
<dbReference type="InterPro" id="IPR036789">
    <property type="entry name" value="Ribosomal_uL6-like_a/b-dom_sf"/>
</dbReference>
<dbReference type="InterPro" id="IPR020040">
    <property type="entry name" value="Ribosomal_uL6_a/b-dom"/>
</dbReference>
<dbReference type="InterPro" id="IPR019906">
    <property type="entry name" value="Ribosomal_uL6_bac-type"/>
</dbReference>
<dbReference type="InterPro" id="IPR002358">
    <property type="entry name" value="Ribosomal_uL6_CS"/>
</dbReference>
<dbReference type="NCBIfam" id="TIGR03654">
    <property type="entry name" value="L6_bact"/>
    <property type="match status" value="1"/>
</dbReference>
<dbReference type="PANTHER" id="PTHR11655">
    <property type="entry name" value="60S/50S RIBOSOMAL PROTEIN L6/L9"/>
    <property type="match status" value="1"/>
</dbReference>
<dbReference type="PANTHER" id="PTHR11655:SF14">
    <property type="entry name" value="LARGE RIBOSOMAL SUBUNIT PROTEIN UL6M"/>
    <property type="match status" value="1"/>
</dbReference>
<dbReference type="Pfam" id="PF00347">
    <property type="entry name" value="Ribosomal_L6"/>
    <property type="match status" value="2"/>
</dbReference>
<dbReference type="PIRSF" id="PIRSF002162">
    <property type="entry name" value="Ribosomal_L6"/>
    <property type="match status" value="1"/>
</dbReference>
<dbReference type="PRINTS" id="PR00059">
    <property type="entry name" value="RIBOSOMALL6"/>
</dbReference>
<dbReference type="SUPFAM" id="SSF56053">
    <property type="entry name" value="Ribosomal protein L6"/>
    <property type="match status" value="2"/>
</dbReference>
<dbReference type="PROSITE" id="PS00525">
    <property type="entry name" value="RIBOSOMAL_L6_1"/>
    <property type="match status" value="1"/>
</dbReference>
<keyword id="KW-0687">Ribonucleoprotein</keyword>
<keyword id="KW-0689">Ribosomal protein</keyword>
<keyword id="KW-0694">RNA-binding</keyword>
<keyword id="KW-0699">rRNA-binding</keyword>
<accession>Q48VT4</accession>
<feature type="chain" id="PRO_0000260951" description="Large ribosomal subunit protein uL6">
    <location>
        <begin position="1"/>
        <end position="178"/>
    </location>
</feature>
<protein>
    <recommendedName>
        <fullName evidence="1">Large ribosomal subunit protein uL6</fullName>
    </recommendedName>
    <alternativeName>
        <fullName evidence="2">50S ribosomal protein L6</fullName>
    </alternativeName>
</protein>
<evidence type="ECO:0000255" key="1">
    <source>
        <dbReference type="HAMAP-Rule" id="MF_01365"/>
    </source>
</evidence>
<evidence type="ECO:0000305" key="2"/>
<gene>
    <name evidence="1" type="primary">rplF</name>
    <name type="ordered locus">M28_Spy0058</name>
</gene>
<comment type="function">
    <text evidence="1">This protein binds to the 23S rRNA, and is important in its secondary structure. It is located near the subunit interface in the base of the L7/L12 stalk, and near the tRNA binding site of the peptidyltransferase center.</text>
</comment>
<comment type="subunit">
    <text evidence="1">Part of the 50S ribosomal subunit.</text>
</comment>
<comment type="similarity">
    <text evidence="1">Belongs to the universal ribosomal protein uL6 family.</text>
</comment>